<name>DER_LIGS1</name>
<dbReference type="EMBL" id="CP000233">
    <property type="protein sequence ID" value="ABD99696.1"/>
    <property type="molecule type" value="Genomic_DNA"/>
</dbReference>
<dbReference type="RefSeq" id="WP_003700239.1">
    <property type="nucleotide sequence ID" value="NC_007929.1"/>
</dbReference>
<dbReference type="RefSeq" id="YP_535779.1">
    <property type="nucleotide sequence ID" value="NC_007929.1"/>
</dbReference>
<dbReference type="SMR" id="Q1WTQ4"/>
<dbReference type="STRING" id="362948.LSL_0886"/>
<dbReference type="KEGG" id="lsl:LSL_0886"/>
<dbReference type="PATRIC" id="fig|362948.14.peg.961"/>
<dbReference type="HOGENOM" id="CLU_016077_6_2_9"/>
<dbReference type="OrthoDB" id="9805918at2"/>
<dbReference type="Proteomes" id="UP000006559">
    <property type="component" value="Chromosome"/>
</dbReference>
<dbReference type="GO" id="GO:0005525">
    <property type="term" value="F:GTP binding"/>
    <property type="evidence" value="ECO:0007669"/>
    <property type="project" value="UniProtKB-UniRule"/>
</dbReference>
<dbReference type="GO" id="GO:0043022">
    <property type="term" value="F:ribosome binding"/>
    <property type="evidence" value="ECO:0007669"/>
    <property type="project" value="TreeGrafter"/>
</dbReference>
<dbReference type="GO" id="GO:0042254">
    <property type="term" value="P:ribosome biogenesis"/>
    <property type="evidence" value="ECO:0007669"/>
    <property type="project" value="UniProtKB-KW"/>
</dbReference>
<dbReference type="CDD" id="cd01894">
    <property type="entry name" value="EngA1"/>
    <property type="match status" value="1"/>
</dbReference>
<dbReference type="CDD" id="cd01895">
    <property type="entry name" value="EngA2"/>
    <property type="match status" value="1"/>
</dbReference>
<dbReference type="FunFam" id="3.30.300.20:FF:000004">
    <property type="entry name" value="GTPase Der"/>
    <property type="match status" value="1"/>
</dbReference>
<dbReference type="FunFam" id="3.40.50.300:FF:000040">
    <property type="entry name" value="GTPase Der"/>
    <property type="match status" value="1"/>
</dbReference>
<dbReference type="FunFam" id="3.40.50.300:FF:000057">
    <property type="entry name" value="GTPase Der"/>
    <property type="match status" value="1"/>
</dbReference>
<dbReference type="Gene3D" id="3.30.300.20">
    <property type="match status" value="1"/>
</dbReference>
<dbReference type="Gene3D" id="3.40.50.300">
    <property type="entry name" value="P-loop containing nucleotide triphosphate hydrolases"/>
    <property type="match status" value="2"/>
</dbReference>
<dbReference type="HAMAP" id="MF_00195">
    <property type="entry name" value="GTPase_Der"/>
    <property type="match status" value="1"/>
</dbReference>
<dbReference type="InterPro" id="IPR031166">
    <property type="entry name" value="G_ENGA"/>
</dbReference>
<dbReference type="InterPro" id="IPR006073">
    <property type="entry name" value="GTP-bd"/>
</dbReference>
<dbReference type="InterPro" id="IPR016484">
    <property type="entry name" value="GTPase_Der"/>
</dbReference>
<dbReference type="InterPro" id="IPR032859">
    <property type="entry name" value="KH_dom-like"/>
</dbReference>
<dbReference type="InterPro" id="IPR015946">
    <property type="entry name" value="KH_dom-like_a/b"/>
</dbReference>
<dbReference type="InterPro" id="IPR027417">
    <property type="entry name" value="P-loop_NTPase"/>
</dbReference>
<dbReference type="InterPro" id="IPR005225">
    <property type="entry name" value="Small_GTP-bd"/>
</dbReference>
<dbReference type="NCBIfam" id="TIGR03594">
    <property type="entry name" value="GTPase_EngA"/>
    <property type="match status" value="1"/>
</dbReference>
<dbReference type="NCBIfam" id="TIGR00231">
    <property type="entry name" value="small_GTP"/>
    <property type="match status" value="2"/>
</dbReference>
<dbReference type="PANTHER" id="PTHR43834">
    <property type="entry name" value="GTPASE DER"/>
    <property type="match status" value="1"/>
</dbReference>
<dbReference type="PANTHER" id="PTHR43834:SF6">
    <property type="entry name" value="GTPASE DER"/>
    <property type="match status" value="1"/>
</dbReference>
<dbReference type="Pfam" id="PF14714">
    <property type="entry name" value="KH_dom-like"/>
    <property type="match status" value="1"/>
</dbReference>
<dbReference type="Pfam" id="PF01926">
    <property type="entry name" value="MMR_HSR1"/>
    <property type="match status" value="2"/>
</dbReference>
<dbReference type="PIRSF" id="PIRSF006485">
    <property type="entry name" value="GTP-binding_EngA"/>
    <property type="match status" value="1"/>
</dbReference>
<dbReference type="PRINTS" id="PR00326">
    <property type="entry name" value="GTP1OBG"/>
</dbReference>
<dbReference type="SUPFAM" id="SSF52540">
    <property type="entry name" value="P-loop containing nucleoside triphosphate hydrolases"/>
    <property type="match status" value="2"/>
</dbReference>
<dbReference type="PROSITE" id="PS51712">
    <property type="entry name" value="G_ENGA"/>
    <property type="match status" value="2"/>
</dbReference>
<organism>
    <name type="scientific">Ligilactobacillus salivarius (strain UCC118)</name>
    <name type="common">Lactobacillus salivarius</name>
    <dbReference type="NCBI Taxonomy" id="362948"/>
    <lineage>
        <taxon>Bacteria</taxon>
        <taxon>Bacillati</taxon>
        <taxon>Bacillota</taxon>
        <taxon>Bacilli</taxon>
        <taxon>Lactobacillales</taxon>
        <taxon>Lactobacillaceae</taxon>
        <taxon>Ligilactobacillus</taxon>
    </lineage>
</organism>
<gene>
    <name evidence="1" type="primary">der</name>
    <name type="synonym">engA</name>
    <name type="ordered locus">LSL_0886</name>
</gene>
<sequence length="436" mass="49099">MANPVVAIVGRPNVGKSTIFNRLAGERISIVEDTPGVTRDRIYARTEWLGHPFNLIDTGGIDIGDEPFLTQITEQAEIAIEEADVIIFVVSVKEGVTDADEKVARILYRTDKPVVLAVNKVDNPELRADIYDFYSLGFGEPIPVAGTHGIGTGDLLDKIIKEFPKDATNEEDDSIKFSFIGRPNVGKSSLVNAILGENRVIVSNIEGTTRDAIDTRFETEDGTKYTMIDTAGIRKKGKVYENTEKYSVLRAMRAIDRSDVVCVVLNAEEGIREQDKHVAGYAHEAGRAIVIVVNKWDTLKKDNKTMSDFENLIRQEFQYLSYAPIVFVSAKTKQRLDKLPELIKRVNDNHEQRISSAVLNDVVMDAIAHNPTPTDNGKRLRIYYATQVAIKPPTFVIFVNDPELMHFSYERFLENQIREAFDFEGTPIHIIERRRK</sequence>
<proteinExistence type="inferred from homology"/>
<protein>
    <recommendedName>
        <fullName evidence="1">GTPase Der</fullName>
    </recommendedName>
    <alternativeName>
        <fullName evidence="1">GTP-binding protein EngA</fullName>
    </alternativeName>
</protein>
<reference key="1">
    <citation type="journal article" date="2006" name="Proc. Natl. Acad. Sci. U.S.A.">
        <title>Multireplicon genome architecture of Lactobacillus salivarius.</title>
        <authorList>
            <person name="Claesson M.J."/>
            <person name="Li Y."/>
            <person name="Leahy S."/>
            <person name="Canchaya C."/>
            <person name="van Pijkeren J.P."/>
            <person name="Cerdeno-Tarraga A.M."/>
            <person name="Parkhill J."/>
            <person name="Flynn S."/>
            <person name="O'Sullivan G.C."/>
            <person name="Collins J.K."/>
            <person name="Higgins D."/>
            <person name="Shanahan F."/>
            <person name="Fitzgerald G.F."/>
            <person name="van Sinderen D."/>
            <person name="O'Toole P.W."/>
        </authorList>
    </citation>
    <scope>NUCLEOTIDE SEQUENCE [LARGE SCALE GENOMIC DNA]</scope>
    <source>
        <strain>UCC118</strain>
    </source>
</reference>
<keyword id="KW-0342">GTP-binding</keyword>
<keyword id="KW-0547">Nucleotide-binding</keyword>
<keyword id="KW-1185">Reference proteome</keyword>
<keyword id="KW-0677">Repeat</keyword>
<keyword id="KW-0690">Ribosome biogenesis</keyword>
<feature type="chain" id="PRO_1000011651" description="GTPase Der">
    <location>
        <begin position="1"/>
        <end position="436"/>
    </location>
</feature>
<feature type="domain" description="EngA-type G 1">
    <location>
        <begin position="4"/>
        <end position="167"/>
    </location>
</feature>
<feature type="domain" description="EngA-type G 2">
    <location>
        <begin position="175"/>
        <end position="351"/>
    </location>
</feature>
<feature type="domain" description="KH-like" evidence="1">
    <location>
        <begin position="352"/>
        <end position="436"/>
    </location>
</feature>
<feature type="binding site" evidence="1">
    <location>
        <begin position="10"/>
        <end position="17"/>
    </location>
    <ligand>
        <name>GTP</name>
        <dbReference type="ChEBI" id="CHEBI:37565"/>
        <label>1</label>
    </ligand>
</feature>
<feature type="binding site" evidence="1">
    <location>
        <begin position="57"/>
        <end position="61"/>
    </location>
    <ligand>
        <name>GTP</name>
        <dbReference type="ChEBI" id="CHEBI:37565"/>
        <label>1</label>
    </ligand>
</feature>
<feature type="binding site" evidence="1">
    <location>
        <begin position="119"/>
        <end position="122"/>
    </location>
    <ligand>
        <name>GTP</name>
        <dbReference type="ChEBI" id="CHEBI:37565"/>
        <label>1</label>
    </ligand>
</feature>
<feature type="binding site" evidence="1">
    <location>
        <begin position="181"/>
        <end position="188"/>
    </location>
    <ligand>
        <name>GTP</name>
        <dbReference type="ChEBI" id="CHEBI:37565"/>
        <label>2</label>
    </ligand>
</feature>
<feature type="binding site" evidence="1">
    <location>
        <begin position="229"/>
        <end position="233"/>
    </location>
    <ligand>
        <name>GTP</name>
        <dbReference type="ChEBI" id="CHEBI:37565"/>
        <label>2</label>
    </ligand>
</feature>
<feature type="binding site" evidence="1">
    <location>
        <begin position="294"/>
        <end position="297"/>
    </location>
    <ligand>
        <name>GTP</name>
        <dbReference type="ChEBI" id="CHEBI:37565"/>
        <label>2</label>
    </ligand>
</feature>
<comment type="function">
    <text evidence="1">GTPase that plays an essential role in the late steps of ribosome biogenesis.</text>
</comment>
<comment type="subunit">
    <text evidence="1">Associates with the 50S ribosomal subunit.</text>
</comment>
<comment type="similarity">
    <text evidence="1">Belongs to the TRAFAC class TrmE-Era-EngA-EngB-Septin-like GTPase superfamily. EngA (Der) GTPase family.</text>
</comment>
<accession>Q1WTQ4</accession>
<evidence type="ECO:0000255" key="1">
    <source>
        <dbReference type="HAMAP-Rule" id="MF_00195"/>
    </source>
</evidence>